<dbReference type="EMBL" id="AY621340">
    <property type="protein sequence ID" value="AAT51879.1"/>
    <property type="molecule type" value="mRNA"/>
</dbReference>
<dbReference type="RefSeq" id="NP_001032638.1">
    <property type="nucleotide sequence ID" value="NM_001037549.2"/>
</dbReference>
<dbReference type="SMR" id="Q32ZI3"/>
<dbReference type="FunCoup" id="Q32ZI3">
    <property type="interactions" value="163"/>
</dbReference>
<dbReference type="STRING" id="10116.ENSRNOP00000018655"/>
<dbReference type="PaxDb" id="10116-ENSRNOP00000018655"/>
<dbReference type="Ensembl" id="ENSRNOT00000018653.6">
    <property type="protein sequence ID" value="ENSRNOP00000018655.3"/>
    <property type="gene ID" value="ENSRNOG00000038126.5"/>
</dbReference>
<dbReference type="GeneID" id="641624"/>
<dbReference type="KEGG" id="rno:641624"/>
<dbReference type="UCSC" id="RGD:1563630">
    <property type="organism name" value="rat"/>
</dbReference>
<dbReference type="AGR" id="RGD:1563630"/>
<dbReference type="CTD" id="81007"/>
<dbReference type="RGD" id="1563630">
    <property type="gene designation" value="Defb5"/>
</dbReference>
<dbReference type="eggNOG" id="ENOG502SYUI">
    <property type="taxonomic scope" value="Eukaryota"/>
</dbReference>
<dbReference type="GeneTree" id="ENSGT00940000160995"/>
<dbReference type="HOGENOM" id="CLU_189296_4_1_1"/>
<dbReference type="InParanoid" id="Q32ZI3"/>
<dbReference type="OMA" id="LRRTKCC"/>
<dbReference type="OrthoDB" id="9623680at2759"/>
<dbReference type="PhylomeDB" id="Q32ZI3"/>
<dbReference type="PRO" id="PR:Q32ZI3"/>
<dbReference type="Proteomes" id="UP000002494">
    <property type="component" value="Chromosome 16"/>
</dbReference>
<dbReference type="Bgee" id="ENSRNOG00000038126">
    <property type="expression patterns" value="Expressed in esophagus and 14 other cell types or tissues"/>
</dbReference>
<dbReference type="ExpressionAtlas" id="Q32ZI3">
    <property type="expression patterns" value="baseline"/>
</dbReference>
<dbReference type="GO" id="GO:0005615">
    <property type="term" value="C:extracellular space"/>
    <property type="evidence" value="ECO:0000266"/>
    <property type="project" value="RGD"/>
</dbReference>
<dbReference type="GO" id="GO:0031731">
    <property type="term" value="F:CCR6 chemokine receptor binding"/>
    <property type="evidence" value="ECO:0000266"/>
    <property type="project" value="RGD"/>
</dbReference>
<dbReference type="GO" id="GO:0042056">
    <property type="term" value="F:chemoattractant activity"/>
    <property type="evidence" value="ECO:0000318"/>
    <property type="project" value="GO_Central"/>
</dbReference>
<dbReference type="GO" id="GO:0005546">
    <property type="term" value="F:phosphatidylinositol-4,5-bisphosphate binding"/>
    <property type="evidence" value="ECO:0000266"/>
    <property type="project" value="RGD"/>
</dbReference>
<dbReference type="GO" id="GO:0061760">
    <property type="term" value="P:antifungal innate immune response"/>
    <property type="evidence" value="ECO:0000266"/>
    <property type="project" value="RGD"/>
</dbReference>
<dbReference type="GO" id="GO:0061844">
    <property type="term" value="P:antimicrobial humoral immune response mediated by antimicrobial peptide"/>
    <property type="evidence" value="ECO:0000266"/>
    <property type="project" value="RGD"/>
</dbReference>
<dbReference type="GO" id="GO:0060326">
    <property type="term" value="P:cell chemotaxis"/>
    <property type="evidence" value="ECO:0000318"/>
    <property type="project" value="GO_Central"/>
</dbReference>
<dbReference type="GO" id="GO:0006935">
    <property type="term" value="P:chemotaxis"/>
    <property type="evidence" value="ECO:0000266"/>
    <property type="project" value="RGD"/>
</dbReference>
<dbReference type="GO" id="GO:0042742">
    <property type="term" value="P:defense response to bacterium"/>
    <property type="evidence" value="ECO:0000266"/>
    <property type="project" value="RGD"/>
</dbReference>
<dbReference type="GO" id="GO:0050832">
    <property type="term" value="P:defense response to fungus"/>
    <property type="evidence" value="ECO:0000266"/>
    <property type="project" value="RGD"/>
</dbReference>
<dbReference type="GO" id="GO:0050829">
    <property type="term" value="P:defense response to Gram-negative bacterium"/>
    <property type="evidence" value="ECO:0000266"/>
    <property type="project" value="RGD"/>
</dbReference>
<dbReference type="GO" id="GO:0050830">
    <property type="term" value="P:defense response to Gram-positive bacterium"/>
    <property type="evidence" value="ECO:0000266"/>
    <property type="project" value="RGD"/>
</dbReference>
<dbReference type="FunFam" id="3.10.360.10:FF:000001">
    <property type="entry name" value="Beta-defensin 1"/>
    <property type="match status" value="1"/>
</dbReference>
<dbReference type="Gene3D" id="3.10.360.10">
    <property type="entry name" value="Antimicrobial Peptide, Beta-defensin 2, Chain A"/>
    <property type="match status" value="1"/>
</dbReference>
<dbReference type="InterPro" id="IPR001855">
    <property type="entry name" value="Defensin_beta-like"/>
</dbReference>
<dbReference type="PANTHER" id="PTHR20515">
    <property type="entry name" value="BETA-DEFENSIN"/>
    <property type="match status" value="1"/>
</dbReference>
<dbReference type="PANTHER" id="PTHR20515:SF2">
    <property type="entry name" value="DEFENSIN BETA 4A"/>
    <property type="match status" value="1"/>
</dbReference>
<dbReference type="Pfam" id="PF00711">
    <property type="entry name" value="Defensin_beta"/>
    <property type="match status" value="1"/>
</dbReference>
<dbReference type="SUPFAM" id="SSF57392">
    <property type="entry name" value="Defensin-like"/>
    <property type="match status" value="1"/>
</dbReference>
<reference key="1">
    <citation type="journal article" date="2005" name="Physiol. Genomics">
        <title>Cross-species analysis of the mammalian beta-defensin gene family: presence of syntenic gene clusters and preferential expression in the male reproductive tract.</title>
        <authorList>
            <person name="Patil A.A."/>
            <person name="Cai Y."/>
            <person name="Sang Y."/>
            <person name="Blecha F."/>
            <person name="Zhang G."/>
        </authorList>
    </citation>
    <scope>NUCLEOTIDE SEQUENCE [MRNA]</scope>
</reference>
<sequence length="63" mass="6972">MRIHYLLFSFLLVLLSPLSVFTQSINNPVSCVTHGGICWGRCPGSFRQIGTCGLGKVRCCKKK</sequence>
<name>DEFB5_RAT</name>
<accession>Q32ZI3</accession>
<comment type="function">
    <text evidence="1">Has antibacterial activity.</text>
</comment>
<comment type="subcellular location">
    <subcellularLocation>
        <location evidence="1">Secreted</location>
    </subcellularLocation>
</comment>
<comment type="similarity">
    <text evidence="4">Belongs to the beta-defensin family.</text>
</comment>
<keyword id="KW-0044">Antibiotic</keyword>
<keyword id="KW-0929">Antimicrobial</keyword>
<keyword id="KW-0211">Defensin</keyword>
<keyword id="KW-1015">Disulfide bond</keyword>
<keyword id="KW-0873">Pyrrolidone carboxylic acid</keyword>
<keyword id="KW-1185">Reference proteome</keyword>
<keyword id="KW-0964">Secreted</keyword>
<keyword id="KW-0732">Signal</keyword>
<proteinExistence type="inferred from homology"/>
<protein>
    <recommendedName>
        <fullName>Beta-defensin 5</fullName>
        <shortName>BD-5</shortName>
    </recommendedName>
    <alternativeName>
        <fullName>Defensin, beta 5</fullName>
    </alternativeName>
</protein>
<feature type="signal peptide" evidence="3">
    <location>
        <begin position="1"/>
        <end position="22"/>
    </location>
</feature>
<feature type="chain" id="PRO_0000352693" description="Beta-defensin 5">
    <location>
        <begin position="23"/>
        <end position="63"/>
    </location>
</feature>
<feature type="modified residue" description="Pyrrolidone carboxylic acid" evidence="2">
    <location>
        <position position="23"/>
    </location>
</feature>
<feature type="disulfide bond" evidence="1">
    <location>
        <begin position="31"/>
        <end position="59"/>
    </location>
</feature>
<feature type="disulfide bond" evidence="1">
    <location>
        <begin position="38"/>
        <end position="52"/>
    </location>
</feature>
<feature type="disulfide bond" evidence="1">
    <location>
        <begin position="42"/>
        <end position="60"/>
    </location>
</feature>
<gene>
    <name type="primary">Defb5</name>
</gene>
<organism>
    <name type="scientific">Rattus norvegicus</name>
    <name type="common">Rat</name>
    <dbReference type="NCBI Taxonomy" id="10116"/>
    <lineage>
        <taxon>Eukaryota</taxon>
        <taxon>Metazoa</taxon>
        <taxon>Chordata</taxon>
        <taxon>Craniata</taxon>
        <taxon>Vertebrata</taxon>
        <taxon>Euteleostomi</taxon>
        <taxon>Mammalia</taxon>
        <taxon>Eutheria</taxon>
        <taxon>Euarchontoglires</taxon>
        <taxon>Glires</taxon>
        <taxon>Rodentia</taxon>
        <taxon>Myomorpha</taxon>
        <taxon>Muroidea</taxon>
        <taxon>Muridae</taxon>
        <taxon>Murinae</taxon>
        <taxon>Rattus</taxon>
    </lineage>
</organism>
<evidence type="ECO:0000250" key="1"/>
<evidence type="ECO:0000250" key="2">
    <source>
        <dbReference type="UniProtKB" id="P46163"/>
    </source>
</evidence>
<evidence type="ECO:0000255" key="3"/>
<evidence type="ECO:0000305" key="4"/>